<name>RPOE_STRPG</name>
<dbReference type="EMBL" id="AM295007">
    <property type="protein sequence ID" value="CAM29585.1"/>
    <property type="molecule type" value="Genomic_DNA"/>
</dbReference>
<dbReference type="RefSeq" id="WP_002988147.1">
    <property type="nucleotide sequence ID" value="NC_009332.1"/>
</dbReference>
<dbReference type="SMR" id="A2RCL2"/>
<dbReference type="GeneID" id="69900233"/>
<dbReference type="KEGG" id="spf:SpyM50243"/>
<dbReference type="HOGENOM" id="CLU_116648_0_0_9"/>
<dbReference type="GO" id="GO:0000428">
    <property type="term" value="C:DNA-directed RNA polymerase complex"/>
    <property type="evidence" value="ECO:0007669"/>
    <property type="project" value="UniProtKB-KW"/>
</dbReference>
<dbReference type="GO" id="GO:0003899">
    <property type="term" value="F:DNA-directed RNA polymerase activity"/>
    <property type="evidence" value="ECO:0007669"/>
    <property type="project" value="UniProtKB-UniRule"/>
</dbReference>
<dbReference type="GO" id="GO:0006351">
    <property type="term" value="P:DNA-templated transcription"/>
    <property type="evidence" value="ECO:0007669"/>
    <property type="project" value="InterPro"/>
</dbReference>
<dbReference type="GO" id="GO:0006355">
    <property type="term" value="P:regulation of DNA-templated transcription"/>
    <property type="evidence" value="ECO:0007669"/>
    <property type="project" value="UniProtKB-UniRule"/>
</dbReference>
<dbReference type="Gene3D" id="1.10.10.1250">
    <property type="entry name" value="RNA polymerase, subunit delta, N-terminal domain"/>
    <property type="match status" value="1"/>
</dbReference>
<dbReference type="HAMAP" id="MF_00357">
    <property type="entry name" value="RNApol_bact_RpoE"/>
    <property type="match status" value="1"/>
</dbReference>
<dbReference type="InterPro" id="IPR007759">
    <property type="entry name" value="Asxl_HARE-HTH"/>
</dbReference>
<dbReference type="InterPro" id="IPR038087">
    <property type="entry name" value="RNAP_delta_N_dom_sf"/>
</dbReference>
<dbReference type="InterPro" id="IPR029757">
    <property type="entry name" value="RpoE"/>
</dbReference>
<dbReference type="NCBIfam" id="TIGR04567">
    <property type="entry name" value="RNAP_delt_lowGC"/>
    <property type="match status" value="1"/>
</dbReference>
<dbReference type="Pfam" id="PF05066">
    <property type="entry name" value="HARE-HTH"/>
    <property type="match status" value="1"/>
</dbReference>
<dbReference type="PROSITE" id="PS51913">
    <property type="entry name" value="HTH_HARE"/>
    <property type="match status" value="1"/>
</dbReference>
<protein>
    <recommendedName>
        <fullName evidence="1">Probable DNA-directed RNA polymerase subunit delta</fullName>
    </recommendedName>
    <alternativeName>
        <fullName evidence="1">RNAP delta factor</fullName>
    </alternativeName>
</protein>
<gene>
    <name evidence="1" type="primary">rpoE</name>
    <name type="ordered locus">SpyM50243</name>
</gene>
<keyword id="KW-0240">DNA-directed RNA polymerase</keyword>
<keyword id="KW-0548">Nucleotidyltransferase</keyword>
<keyword id="KW-0804">Transcription</keyword>
<keyword id="KW-0808">Transferase</keyword>
<organism>
    <name type="scientific">Streptococcus pyogenes serotype M5 (strain Manfredo)</name>
    <dbReference type="NCBI Taxonomy" id="160491"/>
    <lineage>
        <taxon>Bacteria</taxon>
        <taxon>Bacillati</taxon>
        <taxon>Bacillota</taxon>
        <taxon>Bacilli</taxon>
        <taxon>Lactobacillales</taxon>
        <taxon>Streptococcaceae</taxon>
        <taxon>Streptococcus</taxon>
    </lineage>
</organism>
<sequence length="191" mass="22265">MKLDVFAGQEKSELSMIEVARAILEERGRDNEMYFSDLVNEIQNYLGKSDAGIRHALPFFYTDLNTDGSFIPLGENKWGLRSWYAIDEIDEEIITLEEDEDGAQKRKKKRVNAFMDGDEDAIDYRDDDPEDEDFTEESAEVEYDEEDPDDEKSEVESYDSELNEIIPEDDFEEVDINEEDEEDEEDEEPVL</sequence>
<comment type="function">
    <text evidence="1">Participates in both the initiation and recycling phases of transcription. In the presence of the delta subunit, RNAP displays an increased specificity of transcription, a decreased affinity for nucleic acids, and an increased efficiency of RNA synthesis because of enhanced recycling.</text>
</comment>
<comment type="subunit">
    <text evidence="1">RNAP is composed of a core of 2 alpha, a beta and a beta' subunits. The core is associated with a delta subunit and one of several sigma factors.</text>
</comment>
<comment type="similarity">
    <text evidence="1">Belongs to the RpoE family.</text>
</comment>
<evidence type="ECO:0000255" key="1">
    <source>
        <dbReference type="HAMAP-Rule" id="MF_00357"/>
    </source>
</evidence>
<evidence type="ECO:0000255" key="2">
    <source>
        <dbReference type="PROSITE-ProRule" id="PRU01261"/>
    </source>
</evidence>
<evidence type="ECO:0000256" key="3">
    <source>
        <dbReference type="SAM" id="MobiDB-lite"/>
    </source>
</evidence>
<reference key="1">
    <citation type="journal article" date="2007" name="J. Bacteriol.">
        <title>Complete genome of acute rheumatic fever-associated serotype M5 Streptococcus pyogenes strain Manfredo.</title>
        <authorList>
            <person name="Holden M.T.G."/>
            <person name="Scott A."/>
            <person name="Cherevach I."/>
            <person name="Chillingworth T."/>
            <person name="Churcher C."/>
            <person name="Cronin A."/>
            <person name="Dowd L."/>
            <person name="Feltwell T."/>
            <person name="Hamlin N."/>
            <person name="Holroyd S."/>
            <person name="Jagels K."/>
            <person name="Moule S."/>
            <person name="Mungall K."/>
            <person name="Quail M.A."/>
            <person name="Price C."/>
            <person name="Rabbinowitsch E."/>
            <person name="Sharp S."/>
            <person name="Skelton J."/>
            <person name="Whitehead S."/>
            <person name="Barrell B.G."/>
            <person name="Kehoe M."/>
            <person name="Parkhill J."/>
        </authorList>
    </citation>
    <scope>NUCLEOTIDE SEQUENCE [LARGE SCALE GENOMIC DNA]</scope>
    <source>
        <strain>Manfredo</strain>
    </source>
</reference>
<proteinExistence type="inferred from homology"/>
<feature type="chain" id="PRO_0000303144" description="Probable DNA-directed RNA polymerase subunit delta">
    <location>
        <begin position="1"/>
        <end position="191"/>
    </location>
</feature>
<feature type="domain" description="HTH HARE-type" evidence="2">
    <location>
        <begin position="14"/>
        <end position="83"/>
    </location>
</feature>
<feature type="region of interest" description="Disordered" evidence="3">
    <location>
        <begin position="118"/>
        <end position="191"/>
    </location>
</feature>
<accession>A2RCL2</accession>